<evidence type="ECO:0000250" key="1">
    <source>
        <dbReference type="UniProtKB" id="Q9HCJ1"/>
    </source>
</evidence>
<evidence type="ECO:0000255" key="2"/>
<evidence type="ECO:0000256" key="3">
    <source>
        <dbReference type="SAM" id="MobiDB-lite"/>
    </source>
</evidence>
<evidence type="ECO:0000305" key="4"/>
<evidence type="ECO:0000312" key="5">
    <source>
        <dbReference type="RGD" id="619925"/>
    </source>
</evidence>
<comment type="function">
    <text evidence="1">Transports adenosine triphosphate (ATP) and possibly other nucleoside triphosphates (NTPs) from cytosol to the extracellular space. Mainly regulates their levels locally in peripheral tissues while playing a minor systemic role. Prevents abnormal ectopic mineralization of the joints by regulating the extracellular levels of the calcification inhibitor inorganic pyrophosphate (PPi), which originates from the conversion of extracellular NTPs to NMPs and PPis by ENPP1. Regulates the release of the TCA cycle intermediates to the extracellular space, in particular citrate, succinate and malate. Extracellular citrate mostly present in bone tissue is required for osteogenic differentiation of mesenchymal stem cells, stabilization of hydroxyapatite structure and overall bone strength. The transport mechanism remains to be elucidated.</text>
</comment>
<comment type="catalytic activity">
    <reaction evidence="1">
        <text>ATP(in) = ATP(out)</text>
        <dbReference type="Rhea" id="RHEA:75687"/>
        <dbReference type="ChEBI" id="CHEBI:30616"/>
    </reaction>
    <physiologicalReaction direction="left-to-right" evidence="1">
        <dbReference type="Rhea" id="RHEA:75688"/>
    </physiologicalReaction>
</comment>
<comment type="catalytic activity">
    <reaction evidence="1">
        <text>citrate(in) = citrate(out)</text>
        <dbReference type="Rhea" id="RHEA:33183"/>
        <dbReference type="ChEBI" id="CHEBI:16947"/>
    </reaction>
    <physiologicalReaction direction="left-to-right" evidence="1">
        <dbReference type="Rhea" id="RHEA:33184"/>
    </physiologicalReaction>
</comment>
<comment type="subcellular location">
    <subcellularLocation>
        <location evidence="1">Cell membrane</location>
        <topology evidence="2">Multi-pass membrane protein</topology>
    </subcellularLocation>
</comment>
<comment type="similarity">
    <text evidence="4">Belongs to the ANKH family.</text>
</comment>
<accession>P58366</accession>
<protein>
    <recommendedName>
        <fullName evidence="1">Mineralization regulator ANKH</fullName>
    </recommendedName>
    <alternativeName>
        <fullName evidence="1">ATP carrier protein ANKH</fullName>
    </alternativeName>
    <alternativeName>
        <fullName>Progressive ankylosis protein homolog</fullName>
        <shortName evidence="1">ANK</shortName>
    </alternativeName>
</protein>
<feature type="chain" id="PRO_0000137469" description="Mineralization regulator ANKH">
    <location>
        <begin position="1"/>
        <end position="492"/>
    </location>
</feature>
<feature type="topological domain" description="Cytoplasmic" evidence="2">
    <location>
        <begin position="1"/>
        <end position="85"/>
    </location>
</feature>
<feature type="transmembrane region" description="Helical" evidence="2">
    <location>
        <begin position="86"/>
        <end position="106"/>
    </location>
</feature>
<feature type="topological domain" description="Extracellular" evidence="2">
    <location>
        <begin position="107"/>
        <end position="131"/>
    </location>
</feature>
<feature type="transmembrane region" description="Helical" evidence="2">
    <location>
        <begin position="132"/>
        <end position="152"/>
    </location>
</feature>
<feature type="topological domain" description="Cytoplasmic" evidence="2">
    <location>
        <begin position="153"/>
        <end position="158"/>
    </location>
</feature>
<feature type="transmembrane region" description="Helical" evidence="2">
    <location>
        <begin position="159"/>
        <end position="179"/>
    </location>
</feature>
<feature type="topological domain" description="Extracellular" evidence="2">
    <location>
        <begin position="180"/>
        <end position="189"/>
    </location>
</feature>
<feature type="transmembrane region" description="Helical" evidence="2">
    <location>
        <begin position="190"/>
        <end position="210"/>
    </location>
</feature>
<feature type="topological domain" description="Cytoplasmic" evidence="2">
    <location>
        <begin position="211"/>
        <end position="326"/>
    </location>
</feature>
<feature type="transmembrane region" description="Helical" evidence="2">
    <location>
        <begin position="327"/>
        <end position="347"/>
    </location>
</feature>
<feature type="topological domain" description="Extracellular" evidence="2">
    <location>
        <begin position="348"/>
        <end position="350"/>
    </location>
</feature>
<feature type="transmembrane region" description="Helical" evidence="2">
    <location>
        <begin position="351"/>
        <end position="371"/>
    </location>
</feature>
<feature type="topological domain" description="Cytoplasmic" evidence="2">
    <location>
        <begin position="372"/>
        <end position="403"/>
    </location>
</feature>
<feature type="transmembrane region" description="Helical" evidence="2">
    <location>
        <begin position="404"/>
        <end position="426"/>
    </location>
</feature>
<feature type="topological domain" description="Extracellular" evidence="2">
    <location>
        <begin position="427"/>
        <end position="429"/>
    </location>
</feature>
<feature type="transmembrane region" description="Helical" evidence="2">
    <location>
        <begin position="430"/>
        <end position="452"/>
    </location>
</feature>
<feature type="topological domain" description="Cytoplasmic" evidence="2">
    <location>
        <begin position="453"/>
        <end position="492"/>
    </location>
</feature>
<feature type="region of interest" description="Disordered" evidence="3">
    <location>
        <begin position="458"/>
        <end position="492"/>
    </location>
</feature>
<sequence>MVKFPALTHYWPLIRFLVPLGITNIAIDFGEQALNRGIAAVKEDAVEMLASYGLAYSLMKFFAGPMSDFKNVGLVFVNSKRDRAKAVLCMVVAGAIAAVFHTLIAYSDLGYYIINKLHHVDESVGSKTRRAFLYLAAFPFMDAMAWTHAGILLKHKYSFLVGCASISDVIAQVVFVAILLHSHLECREPLLIPILSLYMGALVRCTTLCLGYYRNIHDIIPDRSGPELGGDATIRKMLSFWWPLALILATQRISRPIVNLFVSRDLGGSSAATEAVAILTATYPVGHMPYGWLTEIRAVYPAFDKNNPSNKLANTNNTVTSAHIKKFTFVCMALSLTLCFVMFWTPNVSEKILIDIIGVDFAFAELCVIPLRIFSFFPVPVTVRAHLTGWLMTLKKTFVLAPSSVLRIIVLITSLVVLPYLGVHGATLGVGSLLAGFVGESTMVALAACYVYRKQKKKMENESATEGEDSAMTDMPPAEEVTDIVEMREENE</sequence>
<proteinExistence type="evidence at transcript level"/>
<dbReference type="EMBL" id="AF393241">
    <property type="protein sequence ID" value="AAK73750.1"/>
    <property type="molecule type" value="mRNA"/>
</dbReference>
<dbReference type="RefSeq" id="NP_446166.1">
    <property type="nucleotide sequence ID" value="NM_053714.1"/>
</dbReference>
<dbReference type="SMR" id="P58366"/>
<dbReference type="FunCoup" id="P58366">
    <property type="interactions" value="1350"/>
</dbReference>
<dbReference type="STRING" id="10116.ENSRNOP00000060060"/>
<dbReference type="PhosphoSitePlus" id="P58366"/>
<dbReference type="SwissPalm" id="P58366"/>
<dbReference type="jPOST" id="P58366"/>
<dbReference type="PaxDb" id="10116-ENSRNOP00000060060"/>
<dbReference type="GeneID" id="114506"/>
<dbReference type="KEGG" id="rno:114506"/>
<dbReference type="UCSC" id="RGD:619925">
    <property type="organism name" value="rat"/>
</dbReference>
<dbReference type="AGR" id="RGD:619925"/>
<dbReference type="CTD" id="56172"/>
<dbReference type="RGD" id="619925">
    <property type="gene designation" value="Ankh"/>
</dbReference>
<dbReference type="eggNOG" id="ENOG502QWCU">
    <property type="taxonomic scope" value="Eukaryota"/>
</dbReference>
<dbReference type="InParanoid" id="P58366"/>
<dbReference type="PhylomeDB" id="P58366"/>
<dbReference type="Reactome" id="R-RNO-5223345">
    <property type="pathway name" value="Miscellaneous transport and binding events"/>
</dbReference>
<dbReference type="PRO" id="PR:P58366"/>
<dbReference type="Proteomes" id="UP000002494">
    <property type="component" value="Unplaced"/>
</dbReference>
<dbReference type="GO" id="GO:0005576">
    <property type="term" value="C:extracellular region"/>
    <property type="evidence" value="ECO:0000266"/>
    <property type="project" value="RGD"/>
</dbReference>
<dbReference type="GO" id="GO:0016020">
    <property type="term" value="C:membrane"/>
    <property type="evidence" value="ECO:0000266"/>
    <property type="project" value="RGD"/>
</dbReference>
<dbReference type="GO" id="GO:0005886">
    <property type="term" value="C:plasma membrane"/>
    <property type="evidence" value="ECO:0000250"/>
    <property type="project" value="UniProtKB"/>
</dbReference>
<dbReference type="GO" id="GO:0005347">
    <property type="term" value="F:ATP transmembrane transporter activity"/>
    <property type="evidence" value="ECO:0000266"/>
    <property type="project" value="RGD"/>
</dbReference>
<dbReference type="GO" id="GO:0030504">
    <property type="term" value="F:inorganic diphosphate transmembrane transporter activity"/>
    <property type="evidence" value="ECO:0000250"/>
    <property type="project" value="UniProtKB"/>
</dbReference>
<dbReference type="GO" id="GO:0005315">
    <property type="term" value="F:phosphate transmembrane transporter activity"/>
    <property type="evidence" value="ECO:0000266"/>
    <property type="project" value="RGD"/>
</dbReference>
<dbReference type="GO" id="GO:1904669">
    <property type="term" value="P:ATP export"/>
    <property type="evidence" value="ECO:0000266"/>
    <property type="project" value="RGD"/>
</dbReference>
<dbReference type="GO" id="GO:0030282">
    <property type="term" value="P:bone mineralization"/>
    <property type="evidence" value="ECO:0000266"/>
    <property type="project" value="RGD"/>
</dbReference>
<dbReference type="GO" id="GO:0055074">
    <property type="term" value="P:calcium ion homeostasis"/>
    <property type="evidence" value="ECO:0000266"/>
    <property type="project" value="RGD"/>
</dbReference>
<dbReference type="GO" id="GO:0071529">
    <property type="term" value="P:cementum mineralization"/>
    <property type="evidence" value="ECO:0000266"/>
    <property type="project" value="RGD"/>
</dbReference>
<dbReference type="GO" id="GO:0071344">
    <property type="term" value="P:diphosphate metabolic process"/>
    <property type="evidence" value="ECO:0000266"/>
    <property type="project" value="RGD"/>
</dbReference>
<dbReference type="GO" id="GO:0010467">
    <property type="term" value="P:gene expression"/>
    <property type="evidence" value="ECO:0000266"/>
    <property type="project" value="RGD"/>
</dbReference>
<dbReference type="GO" id="GO:0140928">
    <property type="term" value="P:inhibition of non-skeletal tissue mineralization"/>
    <property type="evidence" value="ECO:0000266"/>
    <property type="project" value="RGD"/>
</dbReference>
<dbReference type="GO" id="GO:0030505">
    <property type="term" value="P:inorganic diphosphate transport"/>
    <property type="evidence" value="ECO:0000266"/>
    <property type="project" value="RGD"/>
</dbReference>
<dbReference type="GO" id="GO:0046716">
    <property type="term" value="P:muscle cell cellular homeostasis"/>
    <property type="evidence" value="ECO:0000266"/>
    <property type="project" value="RGD"/>
</dbReference>
<dbReference type="GO" id="GO:0055062">
    <property type="term" value="P:phosphate ion homeostasis"/>
    <property type="evidence" value="ECO:0000266"/>
    <property type="project" value="RGD"/>
</dbReference>
<dbReference type="GO" id="GO:0035435">
    <property type="term" value="P:phosphate ion transmembrane transport"/>
    <property type="evidence" value="ECO:0007669"/>
    <property type="project" value="InterPro"/>
</dbReference>
<dbReference type="GO" id="GO:0006817">
    <property type="term" value="P:phosphate ion transport"/>
    <property type="evidence" value="ECO:0000304"/>
    <property type="project" value="RGD"/>
</dbReference>
<dbReference type="GO" id="GO:0030500">
    <property type="term" value="P:regulation of bone mineralization"/>
    <property type="evidence" value="ECO:0000250"/>
    <property type="project" value="UniProtKB"/>
</dbReference>
<dbReference type="GO" id="GO:1904383">
    <property type="term" value="P:response to sodium phosphate"/>
    <property type="evidence" value="ECO:0000266"/>
    <property type="project" value="RGD"/>
</dbReference>
<dbReference type="InterPro" id="IPR009887">
    <property type="entry name" value="ANKH"/>
</dbReference>
<dbReference type="PANTHER" id="PTHR28384">
    <property type="entry name" value="PROGRESSIVE ANKYLOSIS PROTEIN HOMOLOG"/>
    <property type="match status" value="1"/>
</dbReference>
<dbReference type="PANTHER" id="PTHR28384:SF1">
    <property type="entry name" value="PROGRESSIVE ANKYLOSIS PROTEIN HOMOLOG"/>
    <property type="match status" value="1"/>
</dbReference>
<dbReference type="Pfam" id="PF07260">
    <property type="entry name" value="ANKH"/>
    <property type="match status" value="1"/>
</dbReference>
<reference key="1">
    <citation type="submission" date="2001-06" db="EMBL/GenBank/DDBJ databases">
        <title>Rat progressive ankylosis gene/termesin.</title>
        <authorList>
            <person name="Miyashiro K."/>
            <person name="Finnell R.H."/>
            <person name="Eberwine J."/>
        </authorList>
    </citation>
    <scope>NUCLEOTIDE SEQUENCE [MRNA]</scope>
    <source>
        <strain>Sprague-Dawley</strain>
        <tissue>Hippocampus</tissue>
    </source>
</reference>
<keyword id="KW-1003">Cell membrane</keyword>
<keyword id="KW-0472">Membrane</keyword>
<keyword id="KW-1185">Reference proteome</keyword>
<keyword id="KW-0812">Transmembrane</keyword>
<keyword id="KW-1133">Transmembrane helix</keyword>
<keyword id="KW-0813">Transport</keyword>
<name>ANKH_RAT</name>
<organism>
    <name type="scientific">Rattus norvegicus</name>
    <name type="common">Rat</name>
    <dbReference type="NCBI Taxonomy" id="10116"/>
    <lineage>
        <taxon>Eukaryota</taxon>
        <taxon>Metazoa</taxon>
        <taxon>Chordata</taxon>
        <taxon>Craniata</taxon>
        <taxon>Vertebrata</taxon>
        <taxon>Euteleostomi</taxon>
        <taxon>Mammalia</taxon>
        <taxon>Eutheria</taxon>
        <taxon>Euarchontoglires</taxon>
        <taxon>Glires</taxon>
        <taxon>Rodentia</taxon>
        <taxon>Myomorpha</taxon>
        <taxon>Muroidea</taxon>
        <taxon>Muridae</taxon>
        <taxon>Murinae</taxon>
        <taxon>Rattus</taxon>
    </lineage>
</organism>
<gene>
    <name evidence="5" type="primary">Ankh</name>
    <name type="synonym">Ank</name>
</gene>